<protein>
    <recommendedName>
        <fullName evidence="1">Porphobilinogen deaminase</fullName>
        <shortName evidence="1">PBG</shortName>
        <ecNumber evidence="1">2.5.1.61</ecNumber>
    </recommendedName>
    <alternativeName>
        <fullName evidence="1">Hydroxymethylbilane synthase</fullName>
        <shortName evidence="1">HMBS</shortName>
    </alternativeName>
    <alternativeName>
        <fullName evidence="1">Pre-uroporphyrinogen synthase</fullName>
    </alternativeName>
</protein>
<keyword id="KW-0627">Porphyrin biosynthesis</keyword>
<keyword id="KW-0808">Transferase</keyword>
<reference key="1">
    <citation type="journal article" date="2001" name="Lancet">
        <title>Whole genome sequencing of meticillin-resistant Staphylococcus aureus.</title>
        <authorList>
            <person name="Kuroda M."/>
            <person name="Ohta T."/>
            <person name="Uchiyama I."/>
            <person name="Baba T."/>
            <person name="Yuzawa H."/>
            <person name="Kobayashi I."/>
            <person name="Cui L."/>
            <person name="Oguchi A."/>
            <person name="Aoki K."/>
            <person name="Nagai Y."/>
            <person name="Lian J.-Q."/>
            <person name="Ito T."/>
            <person name="Kanamori M."/>
            <person name="Matsumaru H."/>
            <person name="Maruyama A."/>
            <person name="Murakami H."/>
            <person name="Hosoyama A."/>
            <person name="Mizutani-Ui Y."/>
            <person name="Takahashi N.K."/>
            <person name="Sawano T."/>
            <person name="Inoue R."/>
            <person name="Kaito C."/>
            <person name="Sekimizu K."/>
            <person name="Hirakawa H."/>
            <person name="Kuhara S."/>
            <person name="Goto S."/>
            <person name="Yabuzaki J."/>
            <person name="Kanehisa M."/>
            <person name="Yamashita A."/>
            <person name="Oshima K."/>
            <person name="Furuya K."/>
            <person name="Yoshino C."/>
            <person name="Shiba T."/>
            <person name="Hattori M."/>
            <person name="Ogasawara N."/>
            <person name="Hayashi H."/>
            <person name="Hiramatsu K."/>
        </authorList>
    </citation>
    <scope>NUCLEOTIDE SEQUENCE [LARGE SCALE GENOMIC DNA]</scope>
    <source>
        <strain>Mu50 / ATCC 700699</strain>
    </source>
</reference>
<feature type="chain" id="PRO_0000142989" description="Porphobilinogen deaminase">
    <location>
        <begin position="1"/>
        <end position="308"/>
    </location>
</feature>
<feature type="modified residue" description="S-(dipyrrolylmethanemethyl)cysteine" evidence="1">
    <location>
        <position position="241"/>
    </location>
</feature>
<name>HEM3_STAAM</name>
<evidence type="ECO:0000255" key="1">
    <source>
        <dbReference type="HAMAP-Rule" id="MF_00260"/>
    </source>
</evidence>
<organism>
    <name type="scientific">Staphylococcus aureus (strain Mu50 / ATCC 700699)</name>
    <dbReference type="NCBI Taxonomy" id="158878"/>
    <lineage>
        <taxon>Bacteria</taxon>
        <taxon>Bacillati</taxon>
        <taxon>Bacillota</taxon>
        <taxon>Bacilli</taxon>
        <taxon>Bacillales</taxon>
        <taxon>Staphylococcaceae</taxon>
        <taxon>Staphylococcus</taxon>
    </lineage>
</organism>
<gene>
    <name evidence="1" type="primary">hemC</name>
    <name type="ordered locus">SAV1670</name>
</gene>
<dbReference type="EC" id="2.5.1.61" evidence="1"/>
<dbReference type="EMBL" id="BA000017">
    <property type="protein sequence ID" value="BAB57832.1"/>
    <property type="molecule type" value="Genomic_DNA"/>
</dbReference>
<dbReference type="RefSeq" id="WP_001230232.1">
    <property type="nucleotide sequence ID" value="NC_002758.2"/>
</dbReference>
<dbReference type="SMR" id="P64340"/>
<dbReference type="KEGG" id="sav:SAV1670"/>
<dbReference type="HOGENOM" id="CLU_019704_0_2_9"/>
<dbReference type="PhylomeDB" id="P64340"/>
<dbReference type="UniPathway" id="UPA00251">
    <property type="reaction ID" value="UER00319"/>
</dbReference>
<dbReference type="Proteomes" id="UP000002481">
    <property type="component" value="Chromosome"/>
</dbReference>
<dbReference type="GO" id="GO:0005737">
    <property type="term" value="C:cytoplasm"/>
    <property type="evidence" value="ECO:0007669"/>
    <property type="project" value="TreeGrafter"/>
</dbReference>
<dbReference type="GO" id="GO:0004418">
    <property type="term" value="F:hydroxymethylbilane synthase activity"/>
    <property type="evidence" value="ECO:0007669"/>
    <property type="project" value="UniProtKB-UniRule"/>
</dbReference>
<dbReference type="GO" id="GO:0006782">
    <property type="term" value="P:protoporphyrinogen IX biosynthetic process"/>
    <property type="evidence" value="ECO:0007669"/>
    <property type="project" value="UniProtKB-UniRule"/>
</dbReference>
<dbReference type="CDD" id="cd13646">
    <property type="entry name" value="PBP2_EcHMBS_like"/>
    <property type="match status" value="1"/>
</dbReference>
<dbReference type="FunFam" id="3.30.160.40:FF:000001">
    <property type="entry name" value="Porphobilinogen deaminase"/>
    <property type="match status" value="1"/>
</dbReference>
<dbReference type="FunFam" id="3.40.190.10:FF:000004">
    <property type="entry name" value="Porphobilinogen deaminase"/>
    <property type="match status" value="1"/>
</dbReference>
<dbReference type="FunFam" id="3.40.190.10:FF:000005">
    <property type="entry name" value="Porphobilinogen deaminase"/>
    <property type="match status" value="1"/>
</dbReference>
<dbReference type="Gene3D" id="3.40.190.10">
    <property type="entry name" value="Periplasmic binding protein-like II"/>
    <property type="match status" value="2"/>
</dbReference>
<dbReference type="Gene3D" id="3.30.160.40">
    <property type="entry name" value="Porphobilinogen deaminase, C-terminal domain"/>
    <property type="match status" value="1"/>
</dbReference>
<dbReference type="HAMAP" id="MF_00260">
    <property type="entry name" value="Porphobil_deam"/>
    <property type="match status" value="1"/>
</dbReference>
<dbReference type="InterPro" id="IPR000860">
    <property type="entry name" value="HemC"/>
</dbReference>
<dbReference type="InterPro" id="IPR022419">
    <property type="entry name" value="Porphobilin_deaminase_cofac_BS"/>
</dbReference>
<dbReference type="InterPro" id="IPR022417">
    <property type="entry name" value="Porphobilin_deaminase_N"/>
</dbReference>
<dbReference type="InterPro" id="IPR022418">
    <property type="entry name" value="Porphobilinogen_deaminase_C"/>
</dbReference>
<dbReference type="InterPro" id="IPR036803">
    <property type="entry name" value="Porphobilinogen_deaminase_C_sf"/>
</dbReference>
<dbReference type="NCBIfam" id="TIGR00212">
    <property type="entry name" value="hemC"/>
    <property type="match status" value="1"/>
</dbReference>
<dbReference type="PANTHER" id="PTHR11557">
    <property type="entry name" value="PORPHOBILINOGEN DEAMINASE"/>
    <property type="match status" value="1"/>
</dbReference>
<dbReference type="PANTHER" id="PTHR11557:SF0">
    <property type="entry name" value="PORPHOBILINOGEN DEAMINASE"/>
    <property type="match status" value="1"/>
</dbReference>
<dbReference type="Pfam" id="PF01379">
    <property type="entry name" value="Porphobil_deam"/>
    <property type="match status" value="1"/>
</dbReference>
<dbReference type="Pfam" id="PF03900">
    <property type="entry name" value="Porphobil_deamC"/>
    <property type="match status" value="1"/>
</dbReference>
<dbReference type="PIRSF" id="PIRSF001438">
    <property type="entry name" value="4pyrrol_synth_OHMeBilane_synth"/>
    <property type="match status" value="1"/>
</dbReference>
<dbReference type="PRINTS" id="PR00151">
    <property type="entry name" value="PORPHBDMNASE"/>
</dbReference>
<dbReference type="SUPFAM" id="SSF53850">
    <property type="entry name" value="Periplasmic binding protein-like II"/>
    <property type="match status" value="1"/>
</dbReference>
<dbReference type="SUPFAM" id="SSF54782">
    <property type="entry name" value="Porphobilinogen deaminase (hydroxymethylbilane synthase), C-terminal domain"/>
    <property type="match status" value="1"/>
</dbReference>
<dbReference type="PROSITE" id="PS00533">
    <property type="entry name" value="PORPHOBILINOGEN_DEAM"/>
    <property type="match status" value="1"/>
</dbReference>
<comment type="function">
    <text evidence="1">Tetrapolymerization of the monopyrrole PBG into the hydroxymethylbilane pre-uroporphyrinogen in several discrete steps.</text>
</comment>
<comment type="catalytic activity">
    <reaction evidence="1">
        <text>4 porphobilinogen + H2O = hydroxymethylbilane + 4 NH4(+)</text>
        <dbReference type="Rhea" id="RHEA:13185"/>
        <dbReference type="ChEBI" id="CHEBI:15377"/>
        <dbReference type="ChEBI" id="CHEBI:28938"/>
        <dbReference type="ChEBI" id="CHEBI:57845"/>
        <dbReference type="ChEBI" id="CHEBI:58126"/>
        <dbReference type="EC" id="2.5.1.61"/>
    </reaction>
</comment>
<comment type="cofactor">
    <cofactor evidence="1">
        <name>dipyrromethane</name>
        <dbReference type="ChEBI" id="CHEBI:60342"/>
    </cofactor>
    <text evidence="1">Binds 1 dipyrromethane group covalently.</text>
</comment>
<comment type="pathway">
    <text evidence="1">Porphyrin-containing compound metabolism; protoporphyrin-IX biosynthesis; coproporphyrinogen-III from 5-aminolevulinate: step 2/4.</text>
</comment>
<comment type="subunit">
    <text evidence="1">Monomer.</text>
</comment>
<comment type="miscellaneous">
    <text evidence="1">The porphobilinogen subunits are added to the dipyrromethane group.</text>
</comment>
<comment type="similarity">
    <text evidence="1">Belongs to the HMBS family.</text>
</comment>
<sequence>MRKLVVGSRRSKLALTQSQQFINKLKAVEPNLEIEIKEIVTKGDRIVDKQLSKVGGKGLFVKEIQHELFEKNIDMAIHSLKDVPSVIPEGLTLGCIPDRELPFDAYISKTHTPLSQLPEGSIIGTSSLRRGAQILSKYPNLEIKWIRGNIDTRLEKLQTEDYDAIILAAAGLRRMGWSDDIVTSYLDRDTLLPAIGQGALGIECRSDDEELLTLLSKVHNDEVAKCVTAERTFLAEMDGSCQVPIAGYATISDQKEIEFTGLIMTPDGKERFEYTMNGTDPVELGKTVSNKLKEQGAYEIIKRLNEQH</sequence>
<proteinExistence type="inferred from homology"/>
<accession>P64340</accession>
<accession>Q99TJ1</accession>